<protein>
    <recommendedName>
        <fullName evidence="7">Pyrin domain-containing protein 1</fullName>
    </recommendedName>
    <alternativeName>
        <fullName evidence="5">PAAD-only protein 1</fullName>
    </alternativeName>
    <alternativeName>
        <fullName evidence="5">Pyrin-only protein 1</fullName>
    </alternativeName>
    <alternativeName>
        <fullName evidence="6">cellular POP1</fullName>
        <shortName evidence="6">cPOP1</shortName>
    </alternativeName>
</protein>
<sequence length="89" mass="10107">MGTKREAILKVLENLTPEELKKFKMKLGTVPLREGFERIPRGALGQLDIVDLTDKLVASYYEDYAAELVVAVLRDMRMLEEAARLQRAA</sequence>
<proteinExistence type="evidence at protein level"/>
<evidence type="ECO:0000255" key="1">
    <source>
        <dbReference type="PROSITE-ProRule" id="PRU00061"/>
    </source>
</evidence>
<evidence type="ECO:0000269" key="2">
    <source>
    </source>
</evidence>
<evidence type="ECO:0000269" key="3">
    <source>
    </source>
</evidence>
<evidence type="ECO:0000269" key="4">
    <source>
    </source>
</evidence>
<evidence type="ECO:0000303" key="5">
    <source>
    </source>
</evidence>
<evidence type="ECO:0000303" key="6">
    <source>
    </source>
</evidence>
<evidence type="ECO:0000305" key="7"/>
<evidence type="ECO:0000312" key="8">
    <source>
        <dbReference type="EMBL" id="AAN03745.1"/>
    </source>
</evidence>
<evidence type="ECO:0000312" key="9">
    <source>
        <dbReference type="HGNC" id="HGNC:30261"/>
    </source>
</evidence>
<evidence type="ECO:0007829" key="10">
    <source>
        <dbReference type="PDB" id="4QOB"/>
    </source>
</evidence>
<comment type="function">
    <text evidence="2 4">Associates with PYCARD/ASC and modulates its ability to collaborate with MEFV/pyrin and NLRP3/cryopyrin in NF-kappa-B and pro-caspase-1 activation. Suppresses kinase activity of NF-kappa-B inhibitor kinase (IKK) complex, expression of NF-kappa-B inducible genes and inhibits NF-kappa-B activation by cytokines and LPS.</text>
</comment>
<comment type="subunit">
    <text evidence="2 3">Interacts with PYCARD/ASC (via pyrin domain).</text>
</comment>
<comment type="subcellular location">
    <subcellularLocation>
        <location evidence="2">Cytoplasm</location>
    </subcellularLocation>
    <text evidence="3">Recruited to specks formed by PYCARD within the cytoplasm.</text>
</comment>
<comment type="tissue specificity">
    <text evidence="2">Predominantly expressed in monocytes, macrophages and granulocytes.</text>
</comment>
<comment type="PTM">
    <text evidence="2">Phosphorylated.</text>
</comment>
<feature type="chain" id="PRO_0000280593" description="Pyrin domain-containing protein 1">
    <location>
        <begin position="1"/>
        <end position="89"/>
    </location>
</feature>
<feature type="domain" description="Pyrin" evidence="1">
    <location>
        <begin position="1"/>
        <end position="89"/>
    </location>
</feature>
<feature type="sequence conflict" description="In Ref. 3; AAN03745." evidence="7" ref="3">
    <original>E</original>
    <variation>G</variation>
    <location>
        <position position="37"/>
    </location>
</feature>
<feature type="helix" evidence="10">
    <location>
        <begin position="4"/>
        <end position="13"/>
    </location>
</feature>
<feature type="helix" evidence="10">
    <location>
        <begin position="17"/>
        <end position="27"/>
    </location>
</feature>
<feature type="helix" evidence="10">
    <location>
        <begin position="41"/>
        <end position="45"/>
    </location>
</feature>
<feature type="helix" evidence="10">
    <location>
        <begin position="49"/>
        <end position="60"/>
    </location>
</feature>
<feature type="helix" evidence="10">
    <location>
        <begin position="62"/>
        <end position="75"/>
    </location>
</feature>
<feature type="helix" evidence="10">
    <location>
        <begin position="79"/>
        <end position="88"/>
    </location>
</feature>
<accession>Q8WXC3</accession>
<accession>B2R8L4</accession>
<accession>Q8NFP8</accession>
<keyword id="KW-0002">3D-structure</keyword>
<keyword id="KW-0963">Cytoplasm</keyword>
<keyword id="KW-0597">Phosphoprotein</keyword>
<keyword id="KW-1267">Proteomics identification</keyword>
<keyword id="KW-1185">Reference proteome</keyword>
<keyword id="KW-0734">Signal transduction inhibitor</keyword>
<organism>
    <name type="scientific">Homo sapiens</name>
    <name type="common">Human</name>
    <dbReference type="NCBI Taxonomy" id="9606"/>
    <lineage>
        <taxon>Eukaryota</taxon>
        <taxon>Metazoa</taxon>
        <taxon>Chordata</taxon>
        <taxon>Craniata</taxon>
        <taxon>Vertebrata</taxon>
        <taxon>Euteleostomi</taxon>
        <taxon>Mammalia</taxon>
        <taxon>Eutheria</taxon>
        <taxon>Euarchontoglires</taxon>
        <taxon>Primates</taxon>
        <taxon>Haplorrhini</taxon>
        <taxon>Catarrhini</taxon>
        <taxon>Hominidae</taxon>
        <taxon>Homo</taxon>
    </lineage>
</organism>
<gene>
    <name evidence="9" type="primary">PYDC1</name>
    <name evidence="5" type="synonym">ASC2</name>
    <name type="synonym">ASCI</name>
    <name evidence="5" type="synonym">POP1</name>
    <name evidence="8" type="synonym">PYC1</name>
</gene>
<dbReference type="EMBL" id="AF454669">
    <property type="protein sequence ID" value="AAL58439.1"/>
    <property type="molecule type" value="mRNA"/>
</dbReference>
<dbReference type="EMBL" id="AY163727">
    <property type="protein sequence ID" value="AAO23114.1"/>
    <property type="molecule type" value="mRNA"/>
</dbReference>
<dbReference type="EMBL" id="AF467809">
    <property type="protein sequence ID" value="AAN03745.1"/>
    <property type="molecule type" value="mRNA"/>
</dbReference>
<dbReference type="EMBL" id="AK313418">
    <property type="protein sequence ID" value="BAG36211.1"/>
    <property type="molecule type" value="mRNA"/>
</dbReference>
<dbReference type="EMBL" id="CH471192">
    <property type="protein sequence ID" value="EAW52147.1"/>
    <property type="molecule type" value="Genomic_DNA"/>
</dbReference>
<dbReference type="EMBL" id="BC105033">
    <property type="protein sequence ID" value="AAI05034.1"/>
    <property type="molecule type" value="mRNA"/>
</dbReference>
<dbReference type="EMBL" id="BC105035">
    <property type="protein sequence ID" value="AAI05036.1"/>
    <property type="molecule type" value="mRNA"/>
</dbReference>
<dbReference type="CCDS" id="CCDS10710.1"/>
<dbReference type="RefSeq" id="NP_690865.1">
    <property type="nucleotide sequence ID" value="NM_152901.4"/>
</dbReference>
<dbReference type="PDB" id="2HM2">
    <property type="method" value="NMR"/>
    <property type="chains" value="Q=1-89"/>
</dbReference>
<dbReference type="PDB" id="4QOB">
    <property type="method" value="X-ray"/>
    <property type="resolution" value="2.70 A"/>
    <property type="chains" value="A/B=1-89"/>
</dbReference>
<dbReference type="PDBsum" id="2HM2"/>
<dbReference type="PDBsum" id="4QOB"/>
<dbReference type="SMR" id="Q8WXC3"/>
<dbReference type="BioGRID" id="129281">
    <property type="interactions" value="2"/>
</dbReference>
<dbReference type="FunCoup" id="Q8WXC3">
    <property type="interactions" value="240"/>
</dbReference>
<dbReference type="IntAct" id="Q8WXC3">
    <property type="interactions" value="1"/>
</dbReference>
<dbReference type="STRING" id="9606.ENSP00000304336"/>
<dbReference type="BioMuta" id="PYDC1"/>
<dbReference type="DMDM" id="74730989"/>
<dbReference type="jPOST" id="Q8WXC3"/>
<dbReference type="MassIVE" id="Q8WXC3"/>
<dbReference type="PaxDb" id="9606-ENSP00000304336"/>
<dbReference type="PeptideAtlas" id="Q8WXC3"/>
<dbReference type="ProteomicsDB" id="75005"/>
<dbReference type="Antibodypedia" id="27781">
    <property type="antibodies" value="176 antibodies from 16 providers"/>
</dbReference>
<dbReference type="DNASU" id="260434"/>
<dbReference type="Ensembl" id="ENST00000302964.4">
    <property type="protein sequence ID" value="ENSP00000304336.4"/>
    <property type="gene ID" value="ENSG00000169900.8"/>
</dbReference>
<dbReference type="GeneID" id="260434"/>
<dbReference type="KEGG" id="hsa:260434"/>
<dbReference type="MANE-Select" id="ENST00000302964.4">
    <property type="protein sequence ID" value="ENSP00000304336.4"/>
    <property type="RefSeq nucleotide sequence ID" value="NM_152901.4"/>
    <property type="RefSeq protein sequence ID" value="NP_690865.1"/>
</dbReference>
<dbReference type="UCSC" id="uc002ebo.4">
    <property type="organism name" value="human"/>
</dbReference>
<dbReference type="AGR" id="HGNC:30261"/>
<dbReference type="CTD" id="260434"/>
<dbReference type="DisGeNET" id="260434"/>
<dbReference type="GeneCards" id="PYDC1"/>
<dbReference type="HGNC" id="HGNC:30261">
    <property type="gene designation" value="PYDC1"/>
</dbReference>
<dbReference type="HPA" id="ENSG00000169900">
    <property type="expression patterns" value="Group enriched (brain, skin)"/>
</dbReference>
<dbReference type="MIM" id="615700">
    <property type="type" value="gene"/>
</dbReference>
<dbReference type="neXtProt" id="NX_Q8WXC3"/>
<dbReference type="OpenTargets" id="ENSG00000169900"/>
<dbReference type="PharmGKB" id="PA142671111"/>
<dbReference type="VEuPathDB" id="HostDB:ENSG00000169900"/>
<dbReference type="eggNOG" id="KOG2177">
    <property type="taxonomic scope" value="Eukaryota"/>
</dbReference>
<dbReference type="GeneTree" id="ENSGT00940000164730"/>
<dbReference type="HOGENOM" id="CLU_163053_0_0_1"/>
<dbReference type="InParanoid" id="Q8WXC3"/>
<dbReference type="OMA" id="QLVASYY"/>
<dbReference type="OrthoDB" id="10058437at2759"/>
<dbReference type="PAN-GO" id="Q8WXC3">
    <property type="GO annotations" value="2 GO annotations based on evolutionary models"/>
</dbReference>
<dbReference type="PhylomeDB" id="Q8WXC3"/>
<dbReference type="PathwayCommons" id="Q8WXC3"/>
<dbReference type="SignaLink" id="Q8WXC3"/>
<dbReference type="BioGRID-ORCS" id="260434">
    <property type="hits" value="13 hits in 1142 CRISPR screens"/>
</dbReference>
<dbReference type="EvolutionaryTrace" id="Q8WXC3"/>
<dbReference type="GenomeRNAi" id="260434"/>
<dbReference type="Pharos" id="Q8WXC3">
    <property type="development level" value="Tbio"/>
</dbReference>
<dbReference type="PRO" id="PR:Q8WXC3"/>
<dbReference type="Proteomes" id="UP000005640">
    <property type="component" value="Chromosome 16"/>
</dbReference>
<dbReference type="RNAct" id="Q8WXC3">
    <property type="molecule type" value="protein"/>
</dbReference>
<dbReference type="Bgee" id="ENSG00000169900">
    <property type="expression patterns" value="Expressed in right hemisphere of cerebellum and 105 other cell types or tissues"/>
</dbReference>
<dbReference type="GO" id="GO:0005829">
    <property type="term" value="C:cytosol"/>
    <property type="evidence" value="ECO:0000314"/>
    <property type="project" value="HGNC-UCL"/>
</dbReference>
<dbReference type="GO" id="GO:0008385">
    <property type="term" value="C:IkappaB kinase complex"/>
    <property type="evidence" value="ECO:0000314"/>
    <property type="project" value="HGNC-UCL"/>
</dbReference>
<dbReference type="GO" id="GO:0005634">
    <property type="term" value="C:nucleus"/>
    <property type="evidence" value="ECO:0000314"/>
    <property type="project" value="HGNC-UCL"/>
</dbReference>
<dbReference type="GO" id="GO:0120283">
    <property type="term" value="F:protein serine/threonine kinase binding"/>
    <property type="evidence" value="ECO:0000353"/>
    <property type="project" value="ARUK-UCL"/>
</dbReference>
<dbReference type="GO" id="GO:0030291">
    <property type="term" value="F:protein serine/threonine kinase inhibitor activity"/>
    <property type="evidence" value="ECO:0000314"/>
    <property type="project" value="HGNC-UCL"/>
</dbReference>
<dbReference type="GO" id="GO:0045087">
    <property type="term" value="P:innate immune response"/>
    <property type="evidence" value="ECO:0000314"/>
    <property type="project" value="HGNC-UCL"/>
</dbReference>
<dbReference type="GO" id="GO:0043124">
    <property type="term" value="P:negative regulation of canonical NF-kappaB signal transduction"/>
    <property type="evidence" value="ECO:0000314"/>
    <property type="project" value="HGNC-UCL"/>
</dbReference>
<dbReference type="GO" id="GO:2000660">
    <property type="term" value="P:negative regulation of interleukin-1-mediated signaling pathway"/>
    <property type="evidence" value="ECO:0000314"/>
    <property type="project" value="ARUK-UCL"/>
</dbReference>
<dbReference type="GO" id="GO:0010804">
    <property type="term" value="P:negative regulation of tumor necrosis factor-mediated signaling pathway"/>
    <property type="evidence" value="ECO:0000314"/>
    <property type="project" value="HGNC-UCL"/>
</dbReference>
<dbReference type="GO" id="GO:0032731">
    <property type="term" value="P:positive regulation of interleukin-1 beta production"/>
    <property type="evidence" value="ECO:0000316"/>
    <property type="project" value="HGNC-UCL"/>
</dbReference>
<dbReference type="CDD" id="cd08321">
    <property type="entry name" value="Pyrin_ASC-like"/>
    <property type="match status" value="1"/>
</dbReference>
<dbReference type="FunFam" id="1.10.533.10:FF:000053">
    <property type="entry name" value="Apoptosis-associated speck-like protein containing a CARD"/>
    <property type="match status" value="1"/>
</dbReference>
<dbReference type="Gene3D" id="1.10.533.10">
    <property type="entry name" value="Death Domain, Fas"/>
    <property type="match status" value="1"/>
</dbReference>
<dbReference type="InterPro" id="IPR004020">
    <property type="entry name" value="DAPIN"/>
</dbReference>
<dbReference type="InterPro" id="IPR011029">
    <property type="entry name" value="DEATH-like_dom_sf"/>
</dbReference>
<dbReference type="Pfam" id="PF02758">
    <property type="entry name" value="PYRIN"/>
    <property type="match status" value="1"/>
</dbReference>
<dbReference type="SMART" id="SM01289">
    <property type="entry name" value="PYRIN"/>
    <property type="match status" value="1"/>
</dbReference>
<dbReference type="SUPFAM" id="SSF47986">
    <property type="entry name" value="DEATH domain"/>
    <property type="match status" value="1"/>
</dbReference>
<dbReference type="PROSITE" id="PS50824">
    <property type="entry name" value="DAPIN"/>
    <property type="match status" value="1"/>
</dbReference>
<reference key="1">
    <citation type="journal article" date="2002" name="J. Biol. Chem.">
        <title>PYPAF1: a PYRIN-containing APAF1-like protein that assembles with ASC and activates NF-kB.</title>
        <authorList>
            <person name="Manji G.A."/>
            <person name="Wang L."/>
            <person name="Geddes B.J."/>
            <person name="Brown M."/>
            <person name="Merriam S."/>
            <person name="Al-Garawi A."/>
            <person name="Mak S."/>
            <person name="Lora J.M."/>
            <person name="Briskin M."/>
            <person name="Jurman M."/>
            <person name="Cao J."/>
            <person name="DiStefano P.S."/>
            <person name="Bertin J."/>
        </authorList>
    </citation>
    <scope>NUCLEOTIDE SEQUENCE [MRNA]</scope>
</reference>
<reference key="2">
    <citation type="journal article" date="2003" name="Biochem. J.">
        <title>The PAAD/PYRIN-only protein POP1/ASC2 is a modulator of ASC-mediated nuclear-factor-kappa B and pro-caspase-1 regulation.</title>
        <authorList>
            <person name="Stehlik C."/>
            <person name="Krajewska M."/>
            <person name="Welsh K."/>
            <person name="Krajewski S."/>
            <person name="Godzik A."/>
            <person name="Reed J.C."/>
        </authorList>
    </citation>
    <scope>NUCLEOTIDE SEQUENCE [MRNA]</scope>
    <scope>FUNCTION</scope>
    <scope>SUBCELLULAR LOCATION</scope>
    <scope>TISSUE SPECIFICITY</scope>
    <scope>PHOSPHORYLATION</scope>
    <scope>INTERACTION WITH PYCARD/ASC</scope>
    <source>
        <tissue>Heart</tissue>
    </source>
</reference>
<reference key="3">
    <citation type="submission" date="2002-01" db="EMBL/GenBank/DDBJ databases">
        <title>Pyc1 a novel regulator of the inflammasome.</title>
        <authorList>
            <person name="Martinon F."/>
            <person name="Hofmann K."/>
            <person name="Tschopp J."/>
        </authorList>
    </citation>
    <scope>NUCLEOTIDE SEQUENCE [MRNA]</scope>
</reference>
<reference key="4">
    <citation type="journal article" date="2004" name="Nat. Genet.">
        <title>Complete sequencing and characterization of 21,243 full-length human cDNAs.</title>
        <authorList>
            <person name="Ota T."/>
            <person name="Suzuki Y."/>
            <person name="Nishikawa T."/>
            <person name="Otsuki T."/>
            <person name="Sugiyama T."/>
            <person name="Irie R."/>
            <person name="Wakamatsu A."/>
            <person name="Hayashi K."/>
            <person name="Sato H."/>
            <person name="Nagai K."/>
            <person name="Kimura K."/>
            <person name="Makita H."/>
            <person name="Sekine M."/>
            <person name="Obayashi M."/>
            <person name="Nishi T."/>
            <person name="Shibahara T."/>
            <person name="Tanaka T."/>
            <person name="Ishii S."/>
            <person name="Yamamoto J."/>
            <person name="Saito K."/>
            <person name="Kawai Y."/>
            <person name="Isono Y."/>
            <person name="Nakamura Y."/>
            <person name="Nagahari K."/>
            <person name="Murakami K."/>
            <person name="Yasuda T."/>
            <person name="Iwayanagi T."/>
            <person name="Wagatsuma M."/>
            <person name="Shiratori A."/>
            <person name="Sudo H."/>
            <person name="Hosoiri T."/>
            <person name="Kaku Y."/>
            <person name="Kodaira H."/>
            <person name="Kondo H."/>
            <person name="Sugawara M."/>
            <person name="Takahashi M."/>
            <person name="Kanda K."/>
            <person name="Yokoi T."/>
            <person name="Furuya T."/>
            <person name="Kikkawa E."/>
            <person name="Omura Y."/>
            <person name="Abe K."/>
            <person name="Kamihara K."/>
            <person name="Katsuta N."/>
            <person name="Sato K."/>
            <person name="Tanikawa M."/>
            <person name="Yamazaki M."/>
            <person name="Ninomiya K."/>
            <person name="Ishibashi T."/>
            <person name="Yamashita H."/>
            <person name="Murakawa K."/>
            <person name="Fujimori K."/>
            <person name="Tanai H."/>
            <person name="Kimata M."/>
            <person name="Watanabe M."/>
            <person name="Hiraoka S."/>
            <person name="Chiba Y."/>
            <person name="Ishida S."/>
            <person name="Ono Y."/>
            <person name="Takiguchi S."/>
            <person name="Watanabe S."/>
            <person name="Yosida M."/>
            <person name="Hotuta T."/>
            <person name="Kusano J."/>
            <person name="Kanehori K."/>
            <person name="Takahashi-Fujii A."/>
            <person name="Hara H."/>
            <person name="Tanase T.-O."/>
            <person name="Nomura Y."/>
            <person name="Togiya S."/>
            <person name="Komai F."/>
            <person name="Hara R."/>
            <person name="Takeuchi K."/>
            <person name="Arita M."/>
            <person name="Imose N."/>
            <person name="Musashino K."/>
            <person name="Yuuki H."/>
            <person name="Oshima A."/>
            <person name="Sasaki N."/>
            <person name="Aotsuka S."/>
            <person name="Yoshikawa Y."/>
            <person name="Matsunawa H."/>
            <person name="Ichihara T."/>
            <person name="Shiohata N."/>
            <person name="Sano S."/>
            <person name="Moriya S."/>
            <person name="Momiyama H."/>
            <person name="Satoh N."/>
            <person name="Takami S."/>
            <person name="Terashima Y."/>
            <person name="Suzuki O."/>
            <person name="Nakagawa S."/>
            <person name="Senoh A."/>
            <person name="Mizoguchi H."/>
            <person name="Goto Y."/>
            <person name="Shimizu F."/>
            <person name="Wakebe H."/>
            <person name="Hishigaki H."/>
            <person name="Watanabe T."/>
            <person name="Sugiyama A."/>
            <person name="Takemoto M."/>
            <person name="Kawakami B."/>
            <person name="Yamazaki M."/>
            <person name="Watanabe K."/>
            <person name="Kumagai A."/>
            <person name="Itakura S."/>
            <person name="Fukuzumi Y."/>
            <person name="Fujimori Y."/>
            <person name="Komiyama M."/>
            <person name="Tashiro H."/>
            <person name="Tanigami A."/>
            <person name="Fujiwara T."/>
            <person name="Ono T."/>
            <person name="Yamada K."/>
            <person name="Fujii Y."/>
            <person name="Ozaki K."/>
            <person name="Hirao M."/>
            <person name="Ohmori Y."/>
            <person name="Kawabata A."/>
            <person name="Hikiji T."/>
            <person name="Kobatake N."/>
            <person name="Inagaki H."/>
            <person name="Ikema Y."/>
            <person name="Okamoto S."/>
            <person name="Okitani R."/>
            <person name="Kawakami T."/>
            <person name="Noguchi S."/>
            <person name="Itoh T."/>
            <person name="Shigeta K."/>
            <person name="Senba T."/>
            <person name="Matsumura K."/>
            <person name="Nakajima Y."/>
            <person name="Mizuno T."/>
            <person name="Morinaga M."/>
            <person name="Sasaki M."/>
            <person name="Togashi T."/>
            <person name="Oyama M."/>
            <person name="Hata H."/>
            <person name="Watanabe M."/>
            <person name="Komatsu T."/>
            <person name="Mizushima-Sugano J."/>
            <person name="Satoh T."/>
            <person name="Shirai Y."/>
            <person name="Takahashi Y."/>
            <person name="Nakagawa K."/>
            <person name="Okumura K."/>
            <person name="Nagase T."/>
            <person name="Nomura N."/>
            <person name="Kikuchi H."/>
            <person name="Masuho Y."/>
            <person name="Yamashita R."/>
            <person name="Nakai K."/>
            <person name="Yada T."/>
            <person name="Nakamura Y."/>
            <person name="Ohara O."/>
            <person name="Isogai T."/>
            <person name="Sugano S."/>
        </authorList>
    </citation>
    <scope>NUCLEOTIDE SEQUENCE [LARGE SCALE MRNA]</scope>
    <source>
        <tissue>Cerebellum</tissue>
    </source>
</reference>
<reference key="5">
    <citation type="submission" date="2005-07" db="EMBL/GenBank/DDBJ databases">
        <authorList>
            <person name="Mural R.J."/>
            <person name="Istrail S."/>
            <person name="Sutton G.G."/>
            <person name="Florea L."/>
            <person name="Halpern A.L."/>
            <person name="Mobarry C.M."/>
            <person name="Lippert R."/>
            <person name="Walenz B."/>
            <person name="Shatkay H."/>
            <person name="Dew I."/>
            <person name="Miller J.R."/>
            <person name="Flanigan M.J."/>
            <person name="Edwards N.J."/>
            <person name="Bolanos R."/>
            <person name="Fasulo D."/>
            <person name="Halldorsson B.V."/>
            <person name="Hannenhalli S."/>
            <person name="Turner R."/>
            <person name="Yooseph S."/>
            <person name="Lu F."/>
            <person name="Nusskern D.R."/>
            <person name="Shue B.C."/>
            <person name="Zheng X.H."/>
            <person name="Zhong F."/>
            <person name="Delcher A.L."/>
            <person name="Huson D.H."/>
            <person name="Kravitz S.A."/>
            <person name="Mouchard L."/>
            <person name="Reinert K."/>
            <person name="Remington K.A."/>
            <person name="Clark A.G."/>
            <person name="Waterman M.S."/>
            <person name="Eichler E.E."/>
            <person name="Adams M.D."/>
            <person name="Hunkapiller M.W."/>
            <person name="Myers E.W."/>
            <person name="Venter J.C."/>
        </authorList>
    </citation>
    <scope>NUCLEOTIDE SEQUENCE [LARGE SCALE GENOMIC DNA]</scope>
</reference>
<reference key="6">
    <citation type="journal article" date="2004" name="Genome Res.">
        <title>The status, quality, and expansion of the NIH full-length cDNA project: the Mammalian Gene Collection (MGC).</title>
        <authorList>
            <consortium name="The MGC Project Team"/>
        </authorList>
    </citation>
    <scope>NUCLEOTIDE SEQUENCE [LARGE SCALE MRNA]</scope>
</reference>
<reference key="7">
    <citation type="journal article" date="2007" name="Infect. Immun.">
        <title>Cellular pyrin domain-only protein 2 is a candidate regulator of inflammasome activation.</title>
        <authorList>
            <person name="Dorfleutner A."/>
            <person name="Bryan N.B."/>
            <person name="Talbott S.J."/>
            <person name="Funya K.N."/>
            <person name="Rellick S.L."/>
            <person name="Reed J.C."/>
            <person name="Shi X."/>
            <person name="Rojanasakul Y."/>
            <person name="Flynn D.C."/>
            <person name="Stehlik C."/>
        </authorList>
    </citation>
    <scope>INTERACTION WITH PYCARD</scope>
    <scope>SUBCELLULAR LOCATION</scope>
</reference>
<reference key="8">
    <citation type="journal article" date="2014" name="Genes Immun.">
        <title>The CLRX.1/NOD24 (NLRP2P) pseudogene codes a functional negative regulator of NF-kappaB, pyrin-only protein 4.</title>
        <authorList>
            <person name="Porter K.A."/>
            <person name="Duffy E.B."/>
            <person name="Nyland P."/>
            <person name="Atianand M.K."/>
            <person name="Sharifi H."/>
            <person name="Harton J.A."/>
        </authorList>
    </citation>
    <scope>FUNCTION</scope>
</reference>
<reference key="9">
    <citation type="journal article" date="2006" name="J. Biol. Chem.">
        <title>Structure and dynamics of ASC2, a pyrin domain-only protein that regulates inflammatory signaling.</title>
        <authorList>
            <person name="Natarajan A."/>
            <person name="Ghose R."/>
            <person name="Hill J.M."/>
        </authorList>
    </citation>
    <scope>STRUCTURE BY NMR</scope>
</reference>
<name>PYDC1_HUMAN</name>